<dbReference type="EMBL" id="AB086961">
    <property type="protein sequence ID" value="BAC20390.1"/>
    <property type="molecule type" value="Genomic_DNA"/>
</dbReference>
<dbReference type="CCDS" id="CCDS27549.1"/>
<dbReference type="RefSeq" id="NP_919331.1">
    <property type="nucleotide sequence ID" value="NM_194350.2"/>
</dbReference>
<dbReference type="SMR" id="Q8CF90"/>
<dbReference type="BioGRID" id="237545">
    <property type="interactions" value="13"/>
</dbReference>
<dbReference type="CORUM" id="Q8CF90"/>
<dbReference type="FunCoup" id="Q8CF90">
    <property type="interactions" value="993"/>
</dbReference>
<dbReference type="STRING" id="10090.ENSMUSP00000054226"/>
<dbReference type="iPTMnet" id="Q8CF90"/>
<dbReference type="PhosphoSitePlus" id="Q8CF90"/>
<dbReference type="PaxDb" id="10090-ENSMUSP00000054226"/>
<dbReference type="ProteomicsDB" id="292075"/>
<dbReference type="Antibodypedia" id="14595">
    <property type="antibodies" value="257 antibodies from 27 providers"/>
</dbReference>
<dbReference type="DNASU" id="378435"/>
<dbReference type="Ensembl" id="ENSMUST00000062002.6">
    <property type="protein sequence ID" value="ENSMUSP00000054226.5"/>
    <property type="gene ID" value="ENSMUSG00000047591.6"/>
</dbReference>
<dbReference type="GeneID" id="378435"/>
<dbReference type="KEGG" id="mmu:378435"/>
<dbReference type="UCSC" id="uc007whe.1">
    <property type="organism name" value="mouse"/>
</dbReference>
<dbReference type="AGR" id="MGI:2673307"/>
<dbReference type="CTD" id="389692"/>
<dbReference type="MGI" id="MGI:2673307">
    <property type="gene designation" value="Mafa"/>
</dbReference>
<dbReference type="VEuPathDB" id="HostDB:ENSMUSG00000047591"/>
<dbReference type="eggNOG" id="KOG4196">
    <property type="taxonomic scope" value="Eukaryota"/>
</dbReference>
<dbReference type="GeneTree" id="ENSGT00940000162747"/>
<dbReference type="HOGENOM" id="CLU_063062_0_0_1"/>
<dbReference type="InParanoid" id="Q8CF90"/>
<dbReference type="OMA" id="SYQHHLN"/>
<dbReference type="OrthoDB" id="5974330at2759"/>
<dbReference type="PhylomeDB" id="Q8CF90"/>
<dbReference type="TreeFam" id="TF325689"/>
<dbReference type="BioGRID-ORCS" id="378435">
    <property type="hits" value="8 hits in 80 CRISPR screens"/>
</dbReference>
<dbReference type="PRO" id="PR:Q8CF90"/>
<dbReference type="Proteomes" id="UP000000589">
    <property type="component" value="Chromosome 15"/>
</dbReference>
<dbReference type="RNAct" id="Q8CF90">
    <property type="molecule type" value="protein"/>
</dbReference>
<dbReference type="Bgee" id="ENSMUSG00000047591">
    <property type="expression patterns" value="Expressed in islet of Langerhans and 80 other cell types or tissues"/>
</dbReference>
<dbReference type="GO" id="GO:0005634">
    <property type="term" value="C:nucleus"/>
    <property type="evidence" value="ECO:0000314"/>
    <property type="project" value="MGI"/>
</dbReference>
<dbReference type="GO" id="GO:0003677">
    <property type="term" value="F:DNA binding"/>
    <property type="evidence" value="ECO:0000314"/>
    <property type="project" value="MGI"/>
</dbReference>
<dbReference type="GO" id="GO:0001228">
    <property type="term" value="F:DNA-binding transcription activator activity, RNA polymerase II-specific"/>
    <property type="evidence" value="ECO:0000314"/>
    <property type="project" value="NTNU_SB"/>
</dbReference>
<dbReference type="GO" id="GO:0000978">
    <property type="term" value="F:RNA polymerase II cis-regulatory region sequence-specific DNA binding"/>
    <property type="evidence" value="ECO:0000314"/>
    <property type="project" value="NTNU_SB"/>
</dbReference>
<dbReference type="GO" id="GO:0030073">
    <property type="term" value="P:insulin secretion"/>
    <property type="evidence" value="ECO:0007669"/>
    <property type="project" value="Ensembl"/>
</dbReference>
<dbReference type="GO" id="GO:0045893">
    <property type="term" value="P:positive regulation of DNA-templated transcription"/>
    <property type="evidence" value="ECO:0000314"/>
    <property type="project" value="MGI"/>
</dbReference>
<dbReference type="GO" id="GO:0045944">
    <property type="term" value="P:positive regulation of transcription by RNA polymerase II"/>
    <property type="evidence" value="ECO:0000314"/>
    <property type="project" value="NTNU_SB"/>
</dbReference>
<dbReference type="GO" id="GO:0009749">
    <property type="term" value="P:response to glucose"/>
    <property type="evidence" value="ECO:0000250"/>
    <property type="project" value="UniProtKB"/>
</dbReference>
<dbReference type="CDD" id="cd14718">
    <property type="entry name" value="bZIP_Maf_large"/>
    <property type="match status" value="1"/>
</dbReference>
<dbReference type="FunFam" id="1.20.5.170:FF:000016">
    <property type="entry name" value="MAF bZIP transcription factor"/>
    <property type="match status" value="1"/>
</dbReference>
<dbReference type="Gene3D" id="1.20.5.170">
    <property type="match status" value="1"/>
</dbReference>
<dbReference type="InterPro" id="IPR004827">
    <property type="entry name" value="bZIP"/>
</dbReference>
<dbReference type="InterPro" id="IPR004826">
    <property type="entry name" value="bZIP_Maf"/>
</dbReference>
<dbReference type="InterPro" id="IPR046347">
    <property type="entry name" value="bZIP_sf"/>
</dbReference>
<dbReference type="InterPro" id="IPR013592">
    <property type="entry name" value="Maf_TF_N"/>
</dbReference>
<dbReference type="InterPro" id="IPR008917">
    <property type="entry name" value="TF_DNA-bd_sf"/>
</dbReference>
<dbReference type="InterPro" id="IPR024874">
    <property type="entry name" value="Transcription_factor_Maf_fam"/>
</dbReference>
<dbReference type="PANTHER" id="PTHR10129">
    <property type="entry name" value="TRANSCRIPTION FACTOR MAF"/>
    <property type="match status" value="1"/>
</dbReference>
<dbReference type="PANTHER" id="PTHR10129:SF30">
    <property type="entry name" value="TRANSCRIPTION FACTOR MAFA"/>
    <property type="match status" value="1"/>
</dbReference>
<dbReference type="Pfam" id="PF03131">
    <property type="entry name" value="bZIP_Maf"/>
    <property type="match status" value="1"/>
</dbReference>
<dbReference type="Pfam" id="PF08383">
    <property type="entry name" value="Maf_N"/>
    <property type="match status" value="1"/>
</dbReference>
<dbReference type="SMART" id="SM00338">
    <property type="entry name" value="BRLZ"/>
    <property type="match status" value="1"/>
</dbReference>
<dbReference type="SUPFAM" id="SSF47454">
    <property type="entry name" value="A DNA-binding domain in eukaryotic transcription factors"/>
    <property type="match status" value="1"/>
</dbReference>
<dbReference type="SUPFAM" id="SSF57959">
    <property type="entry name" value="Leucine zipper domain"/>
    <property type="match status" value="1"/>
</dbReference>
<dbReference type="PROSITE" id="PS50217">
    <property type="entry name" value="BZIP"/>
    <property type="match status" value="1"/>
</dbReference>
<name>MAFA_MOUSE</name>
<comment type="function">
    <text evidence="2 5 6 7 8 9">Transcriptional factor that activates insulin gene expression (PubMed:12368292, PubMed:15665000). Acts synergistically with NEUROD1/BETA2 and PDX1 (PubMed:15665000). Binds the insulin enhancer C1/RIPE3b element (PubMed:12917329, PubMed:14680841, PubMed:14973194, PubMed:15665000). Binds to consensus TRE-type MARE 5'-TGCTGACTCAGCA-3' DNA sequence (By similarity).</text>
</comment>
<comment type="subunit">
    <text evidence="1 2 9">Forms homodimers (By similarity). Interacts with NEUROD1 and PDX1 (PubMed:15665000). May interact with MAFB, FOS, JUN and PCAF (By similarity).</text>
</comment>
<comment type="subcellular location">
    <subcellularLocation>
        <location evidence="5 6 8">Nucleus</location>
    </subcellularLocation>
</comment>
<comment type="tissue specificity">
    <text evidence="5 6 7 10">Expressed in brain, lung, spleen, pancreas and kidney (PubMed:12368292, PubMed:14680841). In the pancreas, expressed in the insulin-producing beta-cells of the islets of Langerhans (at protein level) (PubMed:12917329, PubMed:15923615). Also expressed in the eye (PubMed:12368292, PubMed:15923615).</text>
</comment>
<comment type="developmental stage">
    <text evidence="7 8">In the developing pancreas, expressed exclusively in the insulin-positive cells from 13.5 dpc onward and never in the glucagon-expressing cells (at protein level) (PubMed:14973194). At 12.5dpc, at the mRNA level, detected in each formed somite, in myotomal cells. Also detected in the head neural tube, liver cells and, at low levels, in some mesenchyme-like cells (PubMed:14680841).</text>
</comment>
<comment type="induction">
    <text evidence="5">Up-regulated by glucose in pancreatic beta-cell lines.</text>
</comment>
<comment type="PTM">
    <text evidence="1">Ubiquitinated, leading to its degradation by the proteasome.</text>
</comment>
<comment type="PTM">
    <text evidence="6">Phosphorylated at tyrosines.</text>
</comment>
<comment type="disruption phenotype">
    <text evidence="10">Mice are born at the expected Mendelian rate and survive until adulthood. They show a normal pancreatic morphology at birth. A 12 weeks, they exhibit a reduction in the proportion of Langerhans islet beta-cells and impaired glucose-stimulated insulin secretion and eventually they develop diabetes mellitus.</text>
</comment>
<comment type="similarity">
    <text evidence="11">Belongs to the bZIP family. Maf subfamily.</text>
</comment>
<accession>Q8CF90</accession>
<reference key="1">
    <citation type="journal article" date="2002" name="J. Biol. Chem.">
        <title>MafA is a glucose-regulated and pancreatic beta-cell-specific transcriptional activator for the insulin gene.</title>
        <authorList>
            <person name="Kataoka K."/>
            <person name="Han S.I."/>
            <person name="Shioda S."/>
            <person name="Hirai M."/>
            <person name="Nishizawa M."/>
            <person name="Handa H."/>
        </authorList>
    </citation>
    <scope>NUCLEOTIDE SEQUENCE [GENOMIC DNA]</scope>
    <scope>FUNCTION</scope>
    <scope>SUBCELLULAR LOCATION</scope>
    <scope>TISSUE SPECIFICITY</scope>
    <scope>INDUCTION BY GLUCOSE</scope>
</reference>
<reference key="2">
    <citation type="journal article" date="2003" name="Mol. Cell. Biol.">
        <title>Members of the large Maf transcription family regulate insulin gene transcription in islet beta cells.</title>
        <authorList>
            <person name="Matsuoka T.A."/>
            <person name="Zhao L."/>
            <person name="Artner I."/>
            <person name="Jarrett H.W."/>
            <person name="Friedman D."/>
            <person name="Means A."/>
            <person name="Stein R."/>
        </authorList>
    </citation>
    <scope>PROTEIN SEQUENCE OF 34-40; 293-303 AND 327-352</scope>
    <scope>FUNCTION</scope>
    <scope>SUBCELLULAR LOCATION</scope>
    <scope>TISSUE SPECIFICITY</scope>
    <scope>TYROSINE PHOSPHORYLATION</scope>
    <scope>MASS SPECTROMETRY</scope>
</reference>
<reference key="3">
    <citation type="journal article" date="2003" name="Biochem. Biophys. Res. Commun.">
        <title>Mouse MafA, homologue of zebrafish somite Maf 1, contributes to the specific transcriptional activity through the insulin promoter.</title>
        <authorList>
            <person name="Kajihara M."/>
            <person name="Sone H."/>
            <person name="Amemiya M."/>
            <person name="Katoh Y."/>
            <person name="Isogai M."/>
            <person name="Shimano H."/>
            <person name="Yamada N."/>
            <person name="Takahashi S."/>
        </authorList>
    </citation>
    <scope>FUNCTION</scope>
    <scope>TISSUE SPECIFICITY</scope>
    <scope>DEVELOPMENTAL STAGE</scope>
</reference>
<reference key="4">
    <citation type="journal article" date="2004" name="Proc. Natl. Acad. Sci. U.S.A.">
        <title>The MafA transcription factor appears to be responsible for tissue-specific expression of insulin.</title>
        <authorList>
            <person name="Matsuoka T.A."/>
            <person name="Artner I."/>
            <person name="Henderson E."/>
            <person name="Means A."/>
            <person name="Sander M."/>
            <person name="Stein R."/>
        </authorList>
    </citation>
    <scope>SUBCELLULAR LOCATION</scope>
    <scope>DEVELOPMENTAL STAGE</scope>
</reference>
<reference key="5">
    <citation type="journal article" date="2005" name="J. Biol. Chem.">
        <title>The islet beta cell-enriched MafA activator is a key regulator of insulin gene transcription.</title>
        <authorList>
            <person name="Zhao L."/>
            <person name="Guo M."/>
            <person name="Matsuoka T.A."/>
            <person name="Hagman D.K."/>
            <person name="Parazzoli S.D."/>
            <person name="Poitout V."/>
            <person name="Stein R."/>
        </authorList>
    </citation>
    <scope>FUNCTION</scope>
    <scope>INTERACTION WITH NEUROD1 AND PDX1</scope>
</reference>
<reference key="6">
    <citation type="journal article" date="2005" name="Mol. Cell. Biol.">
        <title>MafA is a key regulator of glucose-stimulated insulin secretion.</title>
        <authorList>
            <person name="Zhang C."/>
            <person name="Moriguchi T."/>
            <person name="Kajihara M."/>
            <person name="Esaki R."/>
            <person name="Harada A."/>
            <person name="Shimohata H."/>
            <person name="Oishi H."/>
            <person name="Hamada M."/>
            <person name="Morito N."/>
            <person name="Hasegawa K."/>
            <person name="Kudo T."/>
            <person name="Engel J.D."/>
            <person name="Yamamoto M."/>
            <person name="Takahashi S."/>
        </authorList>
    </citation>
    <scope>DISRUPTION PHENOTYPE</scope>
    <scope>TISSUE SPECIFICITY</scope>
</reference>
<sequence>MAAELAMGAELPSSPLAIEYVNDFDLMKFEVKKEPPEAERFCHRLPPGSLSSTPLSTPCSSVPSSPSFCAPSPGTGGGAGGGGSAAQAGGAPGPPSGGPGTVGGASGKAVLEDLYWMSGYQHHLNPEALNLTPEDAVEALIGSGHHGAHHGAHHPAAAAAYEAFRGQSFAGGGGADDMGAGHHHGAHHTAHHHHSAHHHHHHHHHHGGSGHHGGGAGHGGGGAGHHVRLEERFSDDQLVSMSVRELNRQLRGFSKEEVIRLKQKRRTLKNRGYAQSCRFKRVQQRHILESEKCQLQSQVEQLKLEVGRLAKERDLYKEKYEKLAGRGGPGGAGGAGFPREPSPAQAGPGAAKGAPDFFL</sequence>
<protein>
    <recommendedName>
        <fullName>Transcription factor MafA</fullName>
    </recommendedName>
    <alternativeName>
        <fullName>Pancreatic beta-cell-specific transcriptional activator</fullName>
    </alternativeName>
    <alternativeName>
        <fullName>V-maf musculoaponeurotic fibrosarcoma oncogene homolog A</fullName>
    </alternativeName>
</protein>
<keyword id="KW-0010">Activator</keyword>
<keyword id="KW-0903">Direct protein sequencing</keyword>
<keyword id="KW-0238">DNA-binding</keyword>
<keyword id="KW-1017">Isopeptide bond</keyword>
<keyword id="KW-0539">Nucleus</keyword>
<keyword id="KW-0597">Phosphoprotein</keyword>
<keyword id="KW-1185">Reference proteome</keyword>
<keyword id="KW-0804">Transcription</keyword>
<keyword id="KW-0805">Transcription regulation</keyword>
<keyword id="KW-0832">Ubl conjugation</keyword>
<organism>
    <name type="scientific">Mus musculus</name>
    <name type="common">Mouse</name>
    <dbReference type="NCBI Taxonomy" id="10090"/>
    <lineage>
        <taxon>Eukaryota</taxon>
        <taxon>Metazoa</taxon>
        <taxon>Chordata</taxon>
        <taxon>Craniata</taxon>
        <taxon>Vertebrata</taxon>
        <taxon>Euteleostomi</taxon>
        <taxon>Mammalia</taxon>
        <taxon>Eutheria</taxon>
        <taxon>Euarchontoglires</taxon>
        <taxon>Glires</taxon>
        <taxon>Rodentia</taxon>
        <taxon>Myomorpha</taxon>
        <taxon>Muroidea</taxon>
        <taxon>Muridae</taxon>
        <taxon>Murinae</taxon>
        <taxon>Mus</taxon>
        <taxon>Mus</taxon>
    </lineage>
</organism>
<gene>
    <name type="primary">Mafa</name>
</gene>
<proteinExistence type="evidence at protein level"/>
<evidence type="ECO:0000250" key="1">
    <source>
        <dbReference type="UniProtKB" id="O57342"/>
    </source>
</evidence>
<evidence type="ECO:0000250" key="2">
    <source>
        <dbReference type="UniProtKB" id="Q8NHW3"/>
    </source>
</evidence>
<evidence type="ECO:0000255" key="3">
    <source>
        <dbReference type="PROSITE-ProRule" id="PRU00978"/>
    </source>
</evidence>
<evidence type="ECO:0000256" key="4">
    <source>
        <dbReference type="SAM" id="MobiDB-lite"/>
    </source>
</evidence>
<evidence type="ECO:0000269" key="5">
    <source>
    </source>
</evidence>
<evidence type="ECO:0000269" key="6">
    <source>
    </source>
</evidence>
<evidence type="ECO:0000269" key="7">
    <source>
    </source>
</evidence>
<evidence type="ECO:0000269" key="8">
    <source>
    </source>
</evidence>
<evidence type="ECO:0000269" key="9">
    <source>
    </source>
</evidence>
<evidence type="ECO:0000269" key="10">
    <source>
    </source>
</evidence>
<evidence type="ECO:0000305" key="11"/>
<feature type="chain" id="PRO_0000320275" description="Transcription factor MafA">
    <location>
        <begin position="1"/>
        <end position="359"/>
    </location>
</feature>
<feature type="domain" description="bZIP" evidence="3">
    <location>
        <begin position="260"/>
        <end position="323"/>
    </location>
</feature>
<feature type="region of interest" description="Disordered" evidence="4">
    <location>
        <begin position="40"/>
        <end position="105"/>
    </location>
</feature>
<feature type="region of interest" description="Disordered" evidence="4">
    <location>
        <begin position="172"/>
        <end position="226"/>
    </location>
</feature>
<feature type="region of interest" description="Basic motif">
    <location>
        <begin position="260"/>
        <end position="285"/>
    </location>
</feature>
<feature type="region of interest" description="Leucine-zipper">
    <location>
        <begin position="288"/>
        <end position="309"/>
    </location>
</feature>
<feature type="region of interest" description="Disordered" evidence="4">
    <location>
        <begin position="322"/>
        <end position="359"/>
    </location>
</feature>
<feature type="compositionally biased region" description="Low complexity" evidence="4">
    <location>
        <begin position="46"/>
        <end position="73"/>
    </location>
</feature>
<feature type="compositionally biased region" description="Gly residues" evidence="4">
    <location>
        <begin position="74"/>
        <end position="84"/>
    </location>
</feature>
<feature type="compositionally biased region" description="Basic residues" evidence="4">
    <location>
        <begin position="181"/>
        <end position="209"/>
    </location>
</feature>
<feature type="compositionally biased region" description="Gly residues" evidence="4">
    <location>
        <begin position="210"/>
        <end position="224"/>
    </location>
</feature>
<feature type="compositionally biased region" description="Gly residues" evidence="4">
    <location>
        <begin position="325"/>
        <end position="336"/>
    </location>
</feature>
<feature type="compositionally biased region" description="Low complexity" evidence="4">
    <location>
        <begin position="343"/>
        <end position="359"/>
    </location>
</feature>
<feature type="modified residue" description="Phosphoserine" evidence="1">
    <location>
        <position position="14"/>
    </location>
</feature>
<feature type="modified residue" description="Phosphoserine" evidence="1">
    <location>
        <position position="49"/>
    </location>
</feature>
<feature type="modified residue" description="Phosphothreonine" evidence="1">
    <location>
        <position position="53"/>
    </location>
</feature>
<feature type="modified residue" description="Phosphothreonine" evidence="1">
    <location>
        <position position="57"/>
    </location>
</feature>
<feature type="modified residue" description="Phosphoserine" evidence="1">
    <location>
        <position position="61"/>
    </location>
</feature>
<feature type="modified residue" description="Phosphoserine" evidence="1">
    <location>
        <position position="65"/>
    </location>
</feature>
<feature type="cross-link" description="Glycyl lysine isopeptide (Lys-Gly) (interchain with G-Cter in SUMO2)" evidence="2">
    <location>
        <position position="32"/>
    </location>
</feature>